<reference key="1">
    <citation type="submission" date="2006-01" db="EMBL/GenBank/DDBJ databases">
        <title>Complete sequence of Rhodopseudomonas palustris HaA2.</title>
        <authorList>
            <consortium name="US DOE Joint Genome Institute"/>
            <person name="Copeland A."/>
            <person name="Lucas S."/>
            <person name="Lapidus A."/>
            <person name="Barry K."/>
            <person name="Detter J.C."/>
            <person name="Glavina T."/>
            <person name="Hammon N."/>
            <person name="Israni S."/>
            <person name="Pitluck S."/>
            <person name="Chain P."/>
            <person name="Malfatti S."/>
            <person name="Shin M."/>
            <person name="Vergez L."/>
            <person name="Schmutz J."/>
            <person name="Larimer F."/>
            <person name="Land M."/>
            <person name="Hauser L."/>
            <person name="Pelletier D.A."/>
            <person name="Kyrpides N."/>
            <person name="Anderson I."/>
            <person name="Oda Y."/>
            <person name="Harwood C.S."/>
            <person name="Richardson P."/>
        </authorList>
    </citation>
    <scope>NUCLEOTIDE SEQUENCE [LARGE SCALE GENOMIC DNA]</scope>
    <source>
        <strain>HaA2</strain>
    </source>
</reference>
<proteinExistence type="inferred from homology"/>
<name>GLGA_RHOP2</name>
<accession>Q2J308</accession>
<feature type="chain" id="PRO_0000241799" description="Glycogen synthase">
    <location>
        <begin position="1"/>
        <end position="482"/>
    </location>
</feature>
<feature type="binding site" evidence="1">
    <location>
        <position position="18"/>
    </location>
    <ligand>
        <name>ADP-alpha-D-glucose</name>
        <dbReference type="ChEBI" id="CHEBI:57498"/>
    </ligand>
</feature>
<evidence type="ECO:0000255" key="1">
    <source>
        <dbReference type="HAMAP-Rule" id="MF_00484"/>
    </source>
</evidence>
<sequence>MSALTALSIASEIFPLIKTGGLADVTGALPTALKPHGIAMRTLVPGYPAVLGGIENPQQVHSFADFFGGSARLLAARCDELELLVLDAPHLYVRPGNPYVGPDGKDWPDNALRFAALAQAGAAIGQGLLLGYAPDILHAHDWQTGLVPAYLAYSGRPAPKCVFTIHNLAYQGQFPYELLTRIGLPERAFSLDGVEYYGGIGYLKAGLQLADRITTVSPTYALEIQGPDAGMGLEGLLRLRADRLSGILNGIDTRVWDPTADELIPATYDIETIGARARNKQALQSRFGLRNAPDALLYGVISRLSWQKGLDMLLDVLPGMLAEGAQLALLGAGDTPLEQGFRAAALKYPGQVGAVIGYDEALAHQIQAGADALLVPSRFEPCGLTQLCALRYGAVPVVARVGGLADTVVDANEMAIATGVATGVQFSPVTAQMLAKALTKTAALHADHAAWRNLQINGMTTDVSWKNPAQHYARLYRELIDA</sequence>
<protein>
    <recommendedName>
        <fullName evidence="1">Glycogen synthase</fullName>
        <ecNumber evidence="1">2.4.1.21</ecNumber>
    </recommendedName>
    <alternativeName>
        <fullName evidence="1">Starch [bacterial glycogen] synthase</fullName>
    </alternativeName>
</protein>
<keyword id="KW-0320">Glycogen biosynthesis</keyword>
<keyword id="KW-0328">Glycosyltransferase</keyword>
<keyword id="KW-1185">Reference proteome</keyword>
<keyword id="KW-0808">Transferase</keyword>
<comment type="function">
    <text evidence="1">Synthesizes alpha-1,4-glucan chains using ADP-glucose.</text>
</comment>
<comment type="catalytic activity">
    <reaction evidence="1">
        <text>[(1-&gt;4)-alpha-D-glucosyl](n) + ADP-alpha-D-glucose = [(1-&gt;4)-alpha-D-glucosyl](n+1) + ADP + H(+)</text>
        <dbReference type="Rhea" id="RHEA:18189"/>
        <dbReference type="Rhea" id="RHEA-COMP:9584"/>
        <dbReference type="Rhea" id="RHEA-COMP:9587"/>
        <dbReference type="ChEBI" id="CHEBI:15378"/>
        <dbReference type="ChEBI" id="CHEBI:15444"/>
        <dbReference type="ChEBI" id="CHEBI:57498"/>
        <dbReference type="ChEBI" id="CHEBI:456216"/>
        <dbReference type="EC" id="2.4.1.21"/>
    </reaction>
</comment>
<comment type="pathway">
    <text evidence="1">Glycan biosynthesis; glycogen biosynthesis.</text>
</comment>
<comment type="similarity">
    <text evidence="1">Belongs to the glycosyltransferase 1 family. Bacterial/plant glycogen synthase subfamily.</text>
</comment>
<organism>
    <name type="scientific">Rhodopseudomonas palustris (strain HaA2)</name>
    <dbReference type="NCBI Taxonomy" id="316058"/>
    <lineage>
        <taxon>Bacteria</taxon>
        <taxon>Pseudomonadati</taxon>
        <taxon>Pseudomonadota</taxon>
        <taxon>Alphaproteobacteria</taxon>
        <taxon>Hyphomicrobiales</taxon>
        <taxon>Nitrobacteraceae</taxon>
        <taxon>Rhodopseudomonas</taxon>
    </lineage>
</organism>
<dbReference type="EC" id="2.4.1.21" evidence="1"/>
<dbReference type="EMBL" id="CP000250">
    <property type="protein sequence ID" value="ABD05152.1"/>
    <property type="molecule type" value="Genomic_DNA"/>
</dbReference>
<dbReference type="RefSeq" id="WP_011439342.1">
    <property type="nucleotide sequence ID" value="NC_007778.1"/>
</dbReference>
<dbReference type="SMR" id="Q2J308"/>
<dbReference type="STRING" id="316058.RPB_0441"/>
<dbReference type="CAZy" id="GT5">
    <property type="family name" value="Glycosyltransferase Family 5"/>
</dbReference>
<dbReference type="KEGG" id="rpb:RPB_0441"/>
<dbReference type="eggNOG" id="COG0297">
    <property type="taxonomic scope" value="Bacteria"/>
</dbReference>
<dbReference type="HOGENOM" id="CLU_009583_18_4_5"/>
<dbReference type="OrthoDB" id="9808590at2"/>
<dbReference type="UniPathway" id="UPA00164"/>
<dbReference type="Proteomes" id="UP000008809">
    <property type="component" value="Chromosome"/>
</dbReference>
<dbReference type="GO" id="GO:0005829">
    <property type="term" value="C:cytosol"/>
    <property type="evidence" value="ECO:0007669"/>
    <property type="project" value="TreeGrafter"/>
</dbReference>
<dbReference type="GO" id="GO:0009011">
    <property type="term" value="F:alpha-1,4-glucan glucosyltransferase (ADP-glucose donor) activity"/>
    <property type="evidence" value="ECO:0007669"/>
    <property type="project" value="UniProtKB-UniRule"/>
</dbReference>
<dbReference type="GO" id="GO:0004373">
    <property type="term" value="F:alpha-1,4-glucan glucosyltransferase (UDP-glucose donor) activity"/>
    <property type="evidence" value="ECO:0007669"/>
    <property type="project" value="InterPro"/>
</dbReference>
<dbReference type="GO" id="GO:0005978">
    <property type="term" value="P:glycogen biosynthetic process"/>
    <property type="evidence" value="ECO:0007669"/>
    <property type="project" value="UniProtKB-UniRule"/>
</dbReference>
<dbReference type="CDD" id="cd03791">
    <property type="entry name" value="GT5_Glycogen_synthase_DULL1-like"/>
    <property type="match status" value="1"/>
</dbReference>
<dbReference type="Gene3D" id="3.40.50.2000">
    <property type="entry name" value="Glycogen Phosphorylase B"/>
    <property type="match status" value="2"/>
</dbReference>
<dbReference type="HAMAP" id="MF_00484">
    <property type="entry name" value="Glycogen_synth"/>
    <property type="match status" value="1"/>
</dbReference>
<dbReference type="InterPro" id="IPR001296">
    <property type="entry name" value="Glyco_trans_1"/>
</dbReference>
<dbReference type="InterPro" id="IPR011835">
    <property type="entry name" value="GS/SS"/>
</dbReference>
<dbReference type="InterPro" id="IPR013534">
    <property type="entry name" value="Starch_synth_cat_dom"/>
</dbReference>
<dbReference type="NCBIfam" id="TIGR02095">
    <property type="entry name" value="glgA"/>
    <property type="match status" value="1"/>
</dbReference>
<dbReference type="NCBIfam" id="NF001899">
    <property type="entry name" value="PRK00654.1-2"/>
    <property type="match status" value="1"/>
</dbReference>
<dbReference type="NCBIfam" id="NF010699">
    <property type="entry name" value="PRK14099.1"/>
    <property type="match status" value="1"/>
</dbReference>
<dbReference type="PANTHER" id="PTHR45825:SF11">
    <property type="entry name" value="ALPHA AMYLASE DOMAIN-CONTAINING PROTEIN"/>
    <property type="match status" value="1"/>
</dbReference>
<dbReference type="PANTHER" id="PTHR45825">
    <property type="entry name" value="GRANULE-BOUND STARCH SYNTHASE 1, CHLOROPLASTIC/AMYLOPLASTIC"/>
    <property type="match status" value="1"/>
</dbReference>
<dbReference type="Pfam" id="PF08323">
    <property type="entry name" value="Glyco_transf_5"/>
    <property type="match status" value="1"/>
</dbReference>
<dbReference type="Pfam" id="PF00534">
    <property type="entry name" value="Glycos_transf_1"/>
    <property type="match status" value="1"/>
</dbReference>
<dbReference type="SUPFAM" id="SSF53756">
    <property type="entry name" value="UDP-Glycosyltransferase/glycogen phosphorylase"/>
    <property type="match status" value="1"/>
</dbReference>
<gene>
    <name evidence="1" type="primary">glgA</name>
    <name type="ordered locus">RPB_0441</name>
</gene>